<sequence>MQQQKIRIRLKAFDYRLIDQSAAEIVDTAKRTGAIVRGPVPLPTRIQRFDILRSPHVNKTSRDQLEIRTHQRLMDIVDPTDKTVDALMKLDLPAGVDVEIKLQ</sequence>
<organism>
    <name type="scientific">Burkholderia mallei (strain NCTC 10247)</name>
    <dbReference type="NCBI Taxonomy" id="320389"/>
    <lineage>
        <taxon>Bacteria</taxon>
        <taxon>Pseudomonadati</taxon>
        <taxon>Pseudomonadota</taxon>
        <taxon>Betaproteobacteria</taxon>
        <taxon>Burkholderiales</taxon>
        <taxon>Burkholderiaceae</taxon>
        <taxon>Burkholderia</taxon>
        <taxon>pseudomallei group</taxon>
    </lineage>
</organism>
<proteinExistence type="inferred from homology"/>
<protein>
    <recommendedName>
        <fullName evidence="1">Small ribosomal subunit protein uS10</fullName>
    </recommendedName>
    <alternativeName>
        <fullName evidence="2">30S ribosomal protein S10</fullName>
    </alternativeName>
</protein>
<comment type="function">
    <text evidence="1">Involved in the binding of tRNA to the ribosomes.</text>
</comment>
<comment type="subunit">
    <text evidence="1">Part of the 30S ribosomal subunit.</text>
</comment>
<comment type="similarity">
    <text evidence="1">Belongs to the universal ribosomal protein uS10 family.</text>
</comment>
<evidence type="ECO:0000255" key="1">
    <source>
        <dbReference type="HAMAP-Rule" id="MF_00508"/>
    </source>
</evidence>
<evidence type="ECO:0000305" key="2"/>
<accession>A3MRV3</accession>
<feature type="chain" id="PRO_1000014997" description="Small ribosomal subunit protein uS10">
    <location>
        <begin position="1"/>
        <end position="103"/>
    </location>
</feature>
<dbReference type="EMBL" id="CP000548">
    <property type="protein sequence ID" value="ABO06283.1"/>
    <property type="molecule type" value="Genomic_DNA"/>
</dbReference>
<dbReference type="RefSeq" id="WP_004199280.1">
    <property type="nucleotide sequence ID" value="NZ_CP007802.1"/>
</dbReference>
<dbReference type="SMR" id="A3MRV3"/>
<dbReference type="GeneID" id="98107161"/>
<dbReference type="KEGG" id="bmaz:BM44_3042"/>
<dbReference type="KEGG" id="bmn:BMA10247_3477"/>
<dbReference type="PATRIC" id="fig|320389.8.peg.3414"/>
<dbReference type="GO" id="GO:1990904">
    <property type="term" value="C:ribonucleoprotein complex"/>
    <property type="evidence" value="ECO:0007669"/>
    <property type="project" value="UniProtKB-KW"/>
</dbReference>
<dbReference type="GO" id="GO:0005840">
    <property type="term" value="C:ribosome"/>
    <property type="evidence" value="ECO:0007669"/>
    <property type="project" value="UniProtKB-KW"/>
</dbReference>
<dbReference type="GO" id="GO:0003735">
    <property type="term" value="F:structural constituent of ribosome"/>
    <property type="evidence" value="ECO:0007669"/>
    <property type="project" value="InterPro"/>
</dbReference>
<dbReference type="GO" id="GO:0000049">
    <property type="term" value="F:tRNA binding"/>
    <property type="evidence" value="ECO:0007669"/>
    <property type="project" value="UniProtKB-UniRule"/>
</dbReference>
<dbReference type="GO" id="GO:0006412">
    <property type="term" value="P:translation"/>
    <property type="evidence" value="ECO:0007669"/>
    <property type="project" value="UniProtKB-UniRule"/>
</dbReference>
<dbReference type="FunFam" id="3.30.70.600:FF:000001">
    <property type="entry name" value="30S ribosomal protein S10"/>
    <property type="match status" value="1"/>
</dbReference>
<dbReference type="Gene3D" id="3.30.70.600">
    <property type="entry name" value="Ribosomal protein S10 domain"/>
    <property type="match status" value="1"/>
</dbReference>
<dbReference type="HAMAP" id="MF_00508">
    <property type="entry name" value="Ribosomal_uS10"/>
    <property type="match status" value="1"/>
</dbReference>
<dbReference type="InterPro" id="IPR001848">
    <property type="entry name" value="Ribosomal_uS10"/>
</dbReference>
<dbReference type="InterPro" id="IPR018268">
    <property type="entry name" value="Ribosomal_uS10_CS"/>
</dbReference>
<dbReference type="InterPro" id="IPR027486">
    <property type="entry name" value="Ribosomal_uS10_dom"/>
</dbReference>
<dbReference type="InterPro" id="IPR036838">
    <property type="entry name" value="Ribosomal_uS10_dom_sf"/>
</dbReference>
<dbReference type="NCBIfam" id="NF001861">
    <property type="entry name" value="PRK00596.1"/>
    <property type="match status" value="1"/>
</dbReference>
<dbReference type="NCBIfam" id="TIGR01049">
    <property type="entry name" value="rpsJ_bact"/>
    <property type="match status" value="1"/>
</dbReference>
<dbReference type="PANTHER" id="PTHR11700">
    <property type="entry name" value="30S RIBOSOMAL PROTEIN S10 FAMILY MEMBER"/>
    <property type="match status" value="1"/>
</dbReference>
<dbReference type="Pfam" id="PF00338">
    <property type="entry name" value="Ribosomal_S10"/>
    <property type="match status" value="1"/>
</dbReference>
<dbReference type="PRINTS" id="PR00971">
    <property type="entry name" value="RIBOSOMALS10"/>
</dbReference>
<dbReference type="SMART" id="SM01403">
    <property type="entry name" value="Ribosomal_S10"/>
    <property type="match status" value="1"/>
</dbReference>
<dbReference type="SUPFAM" id="SSF54999">
    <property type="entry name" value="Ribosomal protein S10"/>
    <property type="match status" value="1"/>
</dbReference>
<dbReference type="PROSITE" id="PS00361">
    <property type="entry name" value="RIBOSOMAL_S10"/>
    <property type="match status" value="1"/>
</dbReference>
<name>RS10_BURM7</name>
<gene>
    <name evidence="1" type="primary">rpsJ</name>
    <name type="ordered locus">BMA10247_3477</name>
</gene>
<reference key="1">
    <citation type="journal article" date="2010" name="Genome Biol. Evol.">
        <title>Continuing evolution of Burkholderia mallei through genome reduction and large-scale rearrangements.</title>
        <authorList>
            <person name="Losada L."/>
            <person name="Ronning C.M."/>
            <person name="DeShazer D."/>
            <person name="Woods D."/>
            <person name="Fedorova N."/>
            <person name="Kim H.S."/>
            <person name="Shabalina S.A."/>
            <person name="Pearson T.R."/>
            <person name="Brinkac L."/>
            <person name="Tan P."/>
            <person name="Nandi T."/>
            <person name="Crabtree J."/>
            <person name="Badger J."/>
            <person name="Beckstrom-Sternberg S."/>
            <person name="Saqib M."/>
            <person name="Schutzer S.E."/>
            <person name="Keim P."/>
            <person name="Nierman W.C."/>
        </authorList>
    </citation>
    <scope>NUCLEOTIDE SEQUENCE [LARGE SCALE GENOMIC DNA]</scope>
    <source>
        <strain>NCTC 10247</strain>
    </source>
</reference>
<keyword id="KW-0687">Ribonucleoprotein</keyword>
<keyword id="KW-0689">Ribosomal protein</keyword>